<proteinExistence type="evidence at protein level"/>
<accession>A2RUW0</accession>
<gene>
    <name type="primary">Mroh7</name>
    <name type="synonym">Heatr8</name>
</gene>
<name>MROH7_RAT</name>
<sequence length="1122" mass="123859">MALSRGTSLILHEDPEKTPSPNSCEVPGIMSNTTPRPTPDLTLAPLPAHGVALAPALHPALSPDPEGVSGPVPNDISNPNASGAATPSSIQINTADTDDQSLDHTPKPNLAGTLCPDSQPVPSLSSTQATVLSPENSIKPLSEDIPKSFSSKVFGLGQSNSNPSRPEPNLYIRALSREALVRSHTISRQSSQTPLLLPSNTSLDRLHSGNISKVNLGRAQNSNEAITLTSHTIFASVSKEALSASWNTGSKGSVNVTSNSQPRSGLNVTVTHASHVSLIPGSSEGLSLHSSAQVPNSTLSPSSCMTLIMGSESLSMDSSFVVTDTSTLTLSSHRDYSEDNSIRTMPLEENLGKWDSLQGVTAFRSPPEGTSEDAKANESEKRDHDNDTALVENIISYQKNQDEVEVTGEKETTVKMMMRKIQEEPLDSLLSPARRQAMEILAQLSHTKPILSVRERVELVNTCVRSVFSLPSVQAMQEKDESKAEVIQTLYHQTLDSLQKLLNALFIEDPTPAGLKSILEPLGPWMNSGKVHERARAVNSNVSVLNYTLVTLPFFVSSGFPTLGLLLGRLLLRIGDPDEEIGREALDGITILYTILDLQKRTKNKEEINKKELYETNKRFLGPYNPASPCQNILRVIAEFGDFLGPQQVRDLLLAALEGLKDISETQGKDSIEMMQLASEVMLSSVLEWYRHRALEVIPEIMQGIYMQLSHIQEPRAREVALLPISFLASSFMTEVVVALLMCPLPLDSNGAEMWRQLILRKPSCDVRDLLDLLLTSLKEKPVTKKGRASIVPLAAASGLCELLSVNSCVGRVRRIYPQLLLALLIQVHYHIGLNLPSRVAPRKDSKDDIQPPLFVPVRWMVKVVKTLLLKMGCSYESAFLEEQGGWELMGQAESHYRAVSLLARAMVHYSCQELCRILYLLIPLLERGDERHKITATAFFVELFRMEQVRRIPEEYSLGRMVEGLSHRDPIMKVLSIRGLVILARRSEKMTKVQGLLPSMVKSLKNMDGVLVMEAVHDLKTIFKGQAKKLTDNSVYIEMLQTLLPHFIDARETVRTSCINTYGKVVKKLRMPRTQAMEEQLTSTLMPLLFIIQEGNAKVSQHFPLEFHTAGIFFLLVCRNV</sequence>
<evidence type="ECO:0000255" key="1"/>
<evidence type="ECO:0000256" key="2">
    <source>
        <dbReference type="SAM" id="MobiDB-lite"/>
    </source>
</evidence>
<evidence type="ECO:0000305" key="3"/>
<evidence type="ECO:0007744" key="4">
    <source>
    </source>
</evidence>
<keyword id="KW-0325">Glycoprotein</keyword>
<keyword id="KW-0472">Membrane</keyword>
<keyword id="KW-0597">Phosphoprotein</keyword>
<keyword id="KW-1185">Reference proteome</keyword>
<keyword id="KW-0677">Repeat</keyword>
<keyword id="KW-0812">Transmembrane</keyword>
<keyword id="KW-1133">Transmembrane helix</keyword>
<feature type="chain" id="PRO_0000286868" description="Maestro heat-like repeat-containing protein family member 7">
    <location>
        <begin position="1"/>
        <end position="1122"/>
    </location>
</feature>
<feature type="transmembrane region" description="Helical" evidence="1">
    <location>
        <begin position="548"/>
        <end position="568"/>
    </location>
</feature>
<feature type="transmembrane region" description="Helical" evidence="1">
    <location>
        <begin position="722"/>
        <end position="742"/>
    </location>
</feature>
<feature type="repeat" description="HEAT 1">
    <location>
        <begin position="913"/>
        <end position="950"/>
    </location>
</feature>
<feature type="repeat" description="HEAT 2">
    <location>
        <begin position="992"/>
        <end position="1029"/>
    </location>
</feature>
<feature type="repeat" description="HEAT 3">
    <location>
        <begin position="1035"/>
        <end position="1072"/>
    </location>
</feature>
<feature type="repeat" description="HEAT 4">
    <location>
        <begin position="1080"/>
        <end position="1117"/>
    </location>
</feature>
<feature type="region of interest" description="Disordered" evidence="2">
    <location>
        <begin position="1"/>
        <end position="144"/>
    </location>
</feature>
<feature type="region of interest" description="Disordered" evidence="2">
    <location>
        <begin position="183"/>
        <end position="203"/>
    </location>
</feature>
<feature type="region of interest" description="Disordered" evidence="2">
    <location>
        <begin position="246"/>
        <end position="265"/>
    </location>
</feature>
<feature type="region of interest" description="Disordered" evidence="2">
    <location>
        <begin position="363"/>
        <end position="385"/>
    </location>
</feature>
<feature type="compositionally biased region" description="Low complexity" evidence="2">
    <location>
        <begin position="33"/>
        <end position="65"/>
    </location>
</feature>
<feature type="compositionally biased region" description="Polar residues" evidence="2">
    <location>
        <begin position="75"/>
        <end position="95"/>
    </location>
</feature>
<feature type="compositionally biased region" description="Polar residues" evidence="2">
    <location>
        <begin position="120"/>
        <end position="136"/>
    </location>
</feature>
<feature type="compositionally biased region" description="Polar residues" evidence="2">
    <location>
        <begin position="184"/>
        <end position="203"/>
    </location>
</feature>
<feature type="compositionally biased region" description="Basic and acidic residues" evidence="2">
    <location>
        <begin position="372"/>
        <end position="385"/>
    </location>
</feature>
<feature type="modified residue" description="Phosphoserine" evidence="4">
    <location>
        <position position="356"/>
    </location>
</feature>
<feature type="glycosylation site" description="N-linked (GlcNAc...) asparagine" evidence="1">
    <location>
        <position position="200"/>
    </location>
</feature>
<feature type="glycosylation site" description="N-linked (GlcNAc...) asparagine" evidence="1">
    <location>
        <position position="210"/>
    </location>
</feature>
<feature type="glycosylation site" description="N-linked (GlcNAc...) asparagine" evidence="1">
    <location>
        <position position="255"/>
    </location>
</feature>
<feature type="glycosylation site" description="N-linked (GlcNAc...) asparagine" evidence="1">
    <location>
        <position position="267"/>
    </location>
</feature>
<feature type="glycosylation site" description="N-linked (GlcNAc...) asparagine" evidence="1">
    <location>
        <position position="296"/>
    </location>
</feature>
<feature type="glycosylation site" description="N-linked (GlcNAc...) asparagine" evidence="1">
    <location>
        <position position="541"/>
    </location>
</feature>
<feature type="glycosylation site" description="N-linked (GlcNAc...) asparagine" evidence="1">
    <location>
        <position position="546"/>
    </location>
</feature>
<dbReference type="EMBL" id="BC133066">
    <property type="protein sequence ID" value="AAI33067.1"/>
    <property type="molecule type" value="mRNA"/>
</dbReference>
<dbReference type="RefSeq" id="NP_001094435.1">
    <property type="nucleotide sequence ID" value="NM_001100965.2"/>
</dbReference>
<dbReference type="FunCoup" id="A2RUW0">
    <property type="interactions" value="47"/>
</dbReference>
<dbReference type="STRING" id="10116.ENSRNOP00000072770"/>
<dbReference type="GlyCosmos" id="A2RUW0">
    <property type="glycosylation" value="7 sites, No reported glycans"/>
</dbReference>
<dbReference type="GlyGen" id="A2RUW0">
    <property type="glycosylation" value="10 sites"/>
</dbReference>
<dbReference type="iPTMnet" id="A2RUW0"/>
<dbReference type="PhosphoSitePlus" id="A2RUW0"/>
<dbReference type="PaxDb" id="10116-ENSRNOP00000054237"/>
<dbReference type="Ensembl" id="ENSRNOT00000089934.2">
    <property type="protein sequence ID" value="ENSRNOP00000072770.1"/>
    <property type="gene ID" value="ENSRNOG00000058870.2"/>
</dbReference>
<dbReference type="UCSC" id="RGD:1563440">
    <property type="organism name" value="rat"/>
</dbReference>
<dbReference type="AGR" id="RGD:1563440"/>
<dbReference type="RGD" id="1563440">
    <property type="gene designation" value="Mroh7"/>
</dbReference>
<dbReference type="eggNOG" id="KOG2032">
    <property type="taxonomic scope" value="Eukaryota"/>
</dbReference>
<dbReference type="GeneTree" id="ENSGT00940000161775"/>
<dbReference type="HOGENOM" id="CLU_003474_0_0_1"/>
<dbReference type="InParanoid" id="A2RUW0"/>
<dbReference type="OMA" id="EASVCIC"/>
<dbReference type="OrthoDB" id="1884734at2759"/>
<dbReference type="PhylomeDB" id="A2RUW0"/>
<dbReference type="TreeFam" id="TF337538"/>
<dbReference type="PRO" id="PR:A2RUW0"/>
<dbReference type="Proteomes" id="UP000002494">
    <property type="component" value="Chromosome 5"/>
</dbReference>
<dbReference type="Bgee" id="ENSRNOG00000058870">
    <property type="expression patterns" value="Expressed in testis and 12 other cell types or tissues"/>
</dbReference>
<dbReference type="GO" id="GO:0005737">
    <property type="term" value="C:cytoplasm"/>
    <property type="evidence" value="ECO:0000318"/>
    <property type="project" value="GO_Central"/>
</dbReference>
<dbReference type="GO" id="GO:0016020">
    <property type="term" value="C:membrane"/>
    <property type="evidence" value="ECO:0007669"/>
    <property type="project" value="UniProtKB-SubCell"/>
</dbReference>
<dbReference type="InterPro" id="IPR016024">
    <property type="entry name" value="ARM-type_fold"/>
</dbReference>
<dbReference type="InterPro" id="IPR055408">
    <property type="entry name" value="HEAT_MROH2B-like"/>
</dbReference>
<dbReference type="InterPro" id="IPR048465">
    <property type="entry name" value="Maestro-like_HEAT"/>
</dbReference>
<dbReference type="InterPro" id="IPR045206">
    <property type="entry name" value="Maestro_heat-like_prot"/>
</dbReference>
<dbReference type="PANTHER" id="PTHR23120:SF17">
    <property type="entry name" value="MAESTRO HEAT-LIKE REPEAT-CONTAINING PROTEIN FAMILY MEMBER 7"/>
    <property type="match status" value="1"/>
</dbReference>
<dbReference type="PANTHER" id="PTHR23120">
    <property type="entry name" value="MAESTRO-RELATED HEAT DOMAIN-CONTAINING"/>
    <property type="match status" value="1"/>
</dbReference>
<dbReference type="Pfam" id="PF21047">
    <property type="entry name" value="HEAT_Maestro"/>
    <property type="match status" value="1"/>
</dbReference>
<dbReference type="Pfam" id="PF23210">
    <property type="entry name" value="HEAT_Maestro_2"/>
    <property type="match status" value="1"/>
</dbReference>
<dbReference type="SUPFAM" id="SSF48371">
    <property type="entry name" value="ARM repeat"/>
    <property type="match status" value="1"/>
</dbReference>
<protein>
    <recommendedName>
        <fullName>Maestro heat-like repeat-containing protein family member 7</fullName>
    </recommendedName>
    <alternativeName>
        <fullName>HEAT repeat-containing protein 8</fullName>
    </alternativeName>
</protein>
<reference key="1">
    <citation type="journal article" date="2004" name="Genome Res.">
        <title>The status, quality, and expansion of the NIH full-length cDNA project: the Mammalian Gene Collection (MGC).</title>
        <authorList>
            <consortium name="The MGC Project Team"/>
        </authorList>
    </citation>
    <scope>NUCLEOTIDE SEQUENCE [LARGE SCALE MRNA]</scope>
    <source>
        <tissue>Testis</tissue>
    </source>
</reference>
<reference key="2">
    <citation type="journal article" date="2012" name="Nat. Commun.">
        <title>Quantitative maps of protein phosphorylation sites across 14 different rat organs and tissues.</title>
        <authorList>
            <person name="Lundby A."/>
            <person name="Secher A."/>
            <person name="Lage K."/>
            <person name="Nordsborg N.B."/>
            <person name="Dmytriyev A."/>
            <person name="Lundby C."/>
            <person name="Olsen J.V."/>
        </authorList>
    </citation>
    <scope>PHOSPHORYLATION [LARGE SCALE ANALYSIS] AT SER-356</scope>
    <scope>IDENTIFICATION BY MASS SPECTROMETRY [LARGE SCALE ANALYSIS]</scope>
</reference>
<comment type="subcellular location">
    <subcellularLocation>
        <location evidence="3">Membrane</location>
        <topology evidence="3">Multi-pass membrane protein</topology>
    </subcellularLocation>
</comment>
<organism>
    <name type="scientific">Rattus norvegicus</name>
    <name type="common">Rat</name>
    <dbReference type="NCBI Taxonomy" id="10116"/>
    <lineage>
        <taxon>Eukaryota</taxon>
        <taxon>Metazoa</taxon>
        <taxon>Chordata</taxon>
        <taxon>Craniata</taxon>
        <taxon>Vertebrata</taxon>
        <taxon>Euteleostomi</taxon>
        <taxon>Mammalia</taxon>
        <taxon>Eutheria</taxon>
        <taxon>Euarchontoglires</taxon>
        <taxon>Glires</taxon>
        <taxon>Rodentia</taxon>
        <taxon>Myomorpha</taxon>
        <taxon>Muroidea</taxon>
        <taxon>Muridae</taxon>
        <taxon>Murinae</taxon>
        <taxon>Rattus</taxon>
    </lineage>
</organism>